<dbReference type="EMBL" id="CP000653">
    <property type="protein sequence ID" value="ABP62414.1"/>
    <property type="molecule type" value="Genomic_DNA"/>
</dbReference>
<dbReference type="RefSeq" id="WP_015960721.1">
    <property type="nucleotide sequence ID" value="NC_009436.1"/>
</dbReference>
<dbReference type="SMR" id="A4WFD4"/>
<dbReference type="STRING" id="399742.Ent638_3758"/>
<dbReference type="GeneID" id="93306733"/>
<dbReference type="KEGG" id="ent:Ent638_3758"/>
<dbReference type="eggNOG" id="COG0049">
    <property type="taxonomic scope" value="Bacteria"/>
</dbReference>
<dbReference type="HOGENOM" id="CLU_072226_1_1_6"/>
<dbReference type="OrthoDB" id="9807653at2"/>
<dbReference type="Proteomes" id="UP000000230">
    <property type="component" value="Chromosome"/>
</dbReference>
<dbReference type="GO" id="GO:0015935">
    <property type="term" value="C:small ribosomal subunit"/>
    <property type="evidence" value="ECO:0007669"/>
    <property type="project" value="InterPro"/>
</dbReference>
<dbReference type="GO" id="GO:0019843">
    <property type="term" value="F:rRNA binding"/>
    <property type="evidence" value="ECO:0007669"/>
    <property type="project" value="UniProtKB-UniRule"/>
</dbReference>
<dbReference type="GO" id="GO:0003735">
    <property type="term" value="F:structural constituent of ribosome"/>
    <property type="evidence" value="ECO:0007669"/>
    <property type="project" value="InterPro"/>
</dbReference>
<dbReference type="GO" id="GO:0000049">
    <property type="term" value="F:tRNA binding"/>
    <property type="evidence" value="ECO:0007669"/>
    <property type="project" value="UniProtKB-UniRule"/>
</dbReference>
<dbReference type="GO" id="GO:0006412">
    <property type="term" value="P:translation"/>
    <property type="evidence" value="ECO:0007669"/>
    <property type="project" value="UniProtKB-UniRule"/>
</dbReference>
<dbReference type="CDD" id="cd14869">
    <property type="entry name" value="uS7_Bacteria"/>
    <property type="match status" value="1"/>
</dbReference>
<dbReference type="FunFam" id="1.10.455.10:FF:000001">
    <property type="entry name" value="30S ribosomal protein S7"/>
    <property type="match status" value="1"/>
</dbReference>
<dbReference type="Gene3D" id="1.10.455.10">
    <property type="entry name" value="Ribosomal protein S7 domain"/>
    <property type="match status" value="1"/>
</dbReference>
<dbReference type="HAMAP" id="MF_00480_B">
    <property type="entry name" value="Ribosomal_uS7_B"/>
    <property type="match status" value="1"/>
</dbReference>
<dbReference type="InterPro" id="IPR000235">
    <property type="entry name" value="Ribosomal_uS7"/>
</dbReference>
<dbReference type="InterPro" id="IPR005717">
    <property type="entry name" value="Ribosomal_uS7_bac/org-type"/>
</dbReference>
<dbReference type="InterPro" id="IPR020606">
    <property type="entry name" value="Ribosomal_uS7_CS"/>
</dbReference>
<dbReference type="InterPro" id="IPR023798">
    <property type="entry name" value="Ribosomal_uS7_dom"/>
</dbReference>
<dbReference type="InterPro" id="IPR036823">
    <property type="entry name" value="Ribosomal_uS7_dom_sf"/>
</dbReference>
<dbReference type="NCBIfam" id="TIGR01029">
    <property type="entry name" value="rpsG_bact"/>
    <property type="match status" value="1"/>
</dbReference>
<dbReference type="PANTHER" id="PTHR11205">
    <property type="entry name" value="RIBOSOMAL PROTEIN S7"/>
    <property type="match status" value="1"/>
</dbReference>
<dbReference type="Pfam" id="PF00177">
    <property type="entry name" value="Ribosomal_S7"/>
    <property type="match status" value="1"/>
</dbReference>
<dbReference type="PIRSF" id="PIRSF002122">
    <property type="entry name" value="RPS7p_RPS7a_RPS5e_RPS7o"/>
    <property type="match status" value="1"/>
</dbReference>
<dbReference type="SUPFAM" id="SSF47973">
    <property type="entry name" value="Ribosomal protein S7"/>
    <property type="match status" value="1"/>
</dbReference>
<dbReference type="PROSITE" id="PS00052">
    <property type="entry name" value="RIBOSOMAL_S7"/>
    <property type="match status" value="1"/>
</dbReference>
<keyword id="KW-0687">Ribonucleoprotein</keyword>
<keyword id="KW-0689">Ribosomal protein</keyword>
<keyword id="KW-0694">RNA-binding</keyword>
<keyword id="KW-0699">rRNA-binding</keyword>
<keyword id="KW-0820">tRNA-binding</keyword>
<protein>
    <recommendedName>
        <fullName evidence="1">Small ribosomal subunit protein uS7</fullName>
    </recommendedName>
    <alternativeName>
        <fullName evidence="2">30S ribosomal protein S7</fullName>
    </alternativeName>
</protein>
<sequence>MPRRRVIGQRKILPDPKFGSELLAKFVNILMVDGKKSTAEAIVYSALETLAQRSDKNALEAFEVALDNVRPTVEVKSRRVGGSTYQVPVEVRPVRRNALAMRWIVEAARKRGDKSMALRLANELSDAADNKGTAVKKREDVHRMAEANKAFAHYRW</sequence>
<gene>
    <name evidence="1" type="primary">rpsG</name>
    <name type="ordered locus">Ent638_3758</name>
</gene>
<evidence type="ECO:0000255" key="1">
    <source>
        <dbReference type="HAMAP-Rule" id="MF_00480"/>
    </source>
</evidence>
<evidence type="ECO:0000305" key="2"/>
<proteinExistence type="inferred from homology"/>
<organism>
    <name type="scientific">Enterobacter sp. (strain 638)</name>
    <dbReference type="NCBI Taxonomy" id="399742"/>
    <lineage>
        <taxon>Bacteria</taxon>
        <taxon>Pseudomonadati</taxon>
        <taxon>Pseudomonadota</taxon>
        <taxon>Gammaproteobacteria</taxon>
        <taxon>Enterobacterales</taxon>
        <taxon>Enterobacteriaceae</taxon>
        <taxon>Enterobacter</taxon>
    </lineage>
</organism>
<name>RS7_ENT38</name>
<comment type="function">
    <text evidence="1">One of the primary rRNA binding proteins, it binds directly to 16S rRNA where it nucleates assembly of the head domain of the 30S subunit. Is located at the subunit interface close to the decoding center, probably blocks exit of the E-site tRNA.</text>
</comment>
<comment type="subunit">
    <text evidence="1">Part of the 30S ribosomal subunit. Contacts proteins S9 and S11.</text>
</comment>
<comment type="similarity">
    <text evidence="1">Belongs to the universal ribosomal protein uS7 family.</text>
</comment>
<reference key="1">
    <citation type="journal article" date="2010" name="PLoS Genet.">
        <title>Genome sequence of the plant growth promoting endophytic bacterium Enterobacter sp. 638.</title>
        <authorList>
            <person name="Taghavi S."/>
            <person name="van der Lelie D."/>
            <person name="Hoffman A."/>
            <person name="Zhang Y.B."/>
            <person name="Walla M.D."/>
            <person name="Vangronsveld J."/>
            <person name="Newman L."/>
            <person name="Monchy S."/>
        </authorList>
    </citation>
    <scope>NUCLEOTIDE SEQUENCE [LARGE SCALE GENOMIC DNA]</scope>
    <source>
        <strain>638</strain>
    </source>
</reference>
<accession>A4WFD4</accession>
<feature type="chain" id="PRO_1000060418" description="Small ribosomal subunit protein uS7">
    <location>
        <begin position="1"/>
        <end position="156"/>
    </location>
</feature>